<reference key="1">
    <citation type="journal article" date="1998" name="FEBS Lett.">
        <title>Mitsugumin23, a novel transmembrane protein on endoplasmic reticulum and nuclear membranes.</title>
        <authorList>
            <person name="Nishi M."/>
            <person name="Komazaki S."/>
            <person name="Iino M."/>
            <person name="Kanagawa K."/>
            <person name="Takeshima H."/>
        </authorList>
    </citation>
    <scope>NUCLEOTIDE SEQUENCE [MRNA]</scope>
    <scope>PARTIAL PROTEIN SEQUENCE</scope>
    <scope>SUBCELLULAR LOCATION</scope>
    <scope>TISSUE SPECIFICITY</scope>
    <source>
        <tissue>Skeletal muscle</tissue>
    </source>
</reference>
<reference key="2">
    <citation type="journal article" date="2011" name="Biochemistry">
        <title>Mitsugumin 23 forms a massive bowl-shaped assembly and cation-conducting channel.</title>
        <authorList>
            <person name="Venturi E."/>
            <person name="Mio K."/>
            <person name="Nishi M."/>
            <person name="Ogura T."/>
            <person name="Moriya T."/>
            <person name="Pitt S.J."/>
            <person name="Okuda K."/>
            <person name="Kakizawa S."/>
            <person name="Sitsapesan R."/>
            <person name="Sato C."/>
            <person name="Takeshima H."/>
        </authorList>
    </citation>
    <scope>FUNCTION</scope>
    <scope>TRANSPORTER ACTIVITY</scope>
    <scope>SUBUNIT</scope>
    <scope>TOPOLOGY</scope>
    <scope>SUBCELLULAR LOCATION</scope>
</reference>
<proteinExistence type="evidence at protein level"/>
<keyword id="KW-0903">Direct protein sequencing</keyword>
<keyword id="KW-0256">Endoplasmic reticulum</keyword>
<keyword id="KW-0407">Ion channel</keyword>
<keyword id="KW-0406">Ion transport</keyword>
<keyword id="KW-0472">Membrane</keyword>
<keyword id="KW-0539">Nucleus</keyword>
<keyword id="KW-1185">Reference proteome</keyword>
<keyword id="KW-0703">Sarcoplasmic reticulum</keyword>
<keyword id="KW-0732">Signal</keyword>
<keyword id="KW-0812">Transmembrane</keyword>
<keyword id="KW-1133">Transmembrane helix</keyword>
<keyword id="KW-0813">Transport</keyword>
<keyword id="KW-0851">Voltage-gated channel</keyword>
<evidence type="ECO:0000250" key="1">
    <source>
        <dbReference type="UniProtKB" id="Q3UBX0"/>
    </source>
</evidence>
<evidence type="ECO:0000250" key="2">
    <source>
        <dbReference type="UniProtKB" id="Q9BVC6"/>
    </source>
</evidence>
<evidence type="ECO:0000255" key="3"/>
<evidence type="ECO:0000269" key="4">
    <source>
    </source>
</evidence>
<evidence type="ECO:0000269" key="5">
    <source>
    </source>
</evidence>
<evidence type="ECO:0000303" key="6">
    <source>
    </source>
</evidence>
<evidence type="ECO:0000305" key="7">
    <source>
    </source>
</evidence>
<organism>
    <name type="scientific">Oryctolagus cuniculus</name>
    <name type="common">Rabbit</name>
    <dbReference type="NCBI Taxonomy" id="9986"/>
    <lineage>
        <taxon>Eukaryota</taxon>
        <taxon>Metazoa</taxon>
        <taxon>Chordata</taxon>
        <taxon>Craniata</taxon>
        <taxon>Vertebrata</taxon>
        <taxon>Euteleostomi</taxon>
        <taxon>Mammalia</taxon>
        <taxon>Eutheria</taxon>
        <taxon>Euarchontoglires</taxon>
        <taxon>Glires</taxon>
        <taxon>Lagomorpha</taxon>
        <taxon>Leporidae</taxon>
        <taxon>Oryctolagus</taxon>
    </lineage>
</organism>
<feature type="signal peptide" evidence="3">
    <location>
        <begin position="1"/>
        <end position="33"/>
    </location>
</feature>
<feature type="chain" id="PRO_0000044620" description="Voltage-gated monoatomic cation channel TMEM109">
    <location>
        <begin position="34"/>
        <end position="243"/>
    </location>
</feature>
<feature type="topological domain" description="Lumenal" evidence="7">
    <location>
        <begin position="34"/>
        <end position="83"/>
    </location>
</feature>
<feature type="transmembrane region" description="Helical" evidence="3">
    <location>
        <begin position="84"/>
        <end position="104"/>
    </location>
</feature>
<feature type="topological domain" description="Cytoplasmic" evidence="7">
    <location>
        <begin position="105"/>
        <end position="135"/>
    </location>
</feature>
<feature type="transmembrane region" description="Helical" evidence="3">
    <location>
        <begin position="136"/>
        <end position="156"/>
    </location>
</feature>
<feature type="topological domain" description="Lumenal" evidence="7">
    <location>
        <begin position="157"/>
        <end position="185"/>
    </location>
</feature>
<feature type="transmembrane region" description="Helical" evidence="3">
    <location>
        <begin position="186"/>
        <end position="205"/>
    </location>
</feature>
<feature type="topological domain" description="Cytoplasmic" evidence="7">
    <location>
        <begin position="206"/>
        <end position="243"/>
    </location>
</feature>
<dbReference type="EMBL" id="AB013721">
    <property type="protein sequence ID" value="BAA33366.1"/>
    <property type="molecule type" value="mRNA"/>
</dbReference>
<dbReference type="RefSeq" id="NP_001075462.1">
    <property type="nucleotide sequence ID" value="NM_001081993.1"/>
</dbReference>
<dbReference type="FunCoup" id="O77751">
    <property type="interactions" value="177"/>
</dbReference>
<dbReference type="STRING" id="9986.ENSOCUP00000013488"/>
<dbReference type="PaxDb" id="9986-ENSOCUP00000013488"/>
<dbReference type="GeneID" id="100008604"/>
<dbReference type="KEGG" id="ocu:100008604"/>
<dbReference type="CTD" id="79073"/>
<dbReference type="eggNOG" id="ENOG502S0EJ">
    <property type="taxonomic scope" value="Eukaryota"/>
</dbReference>
<dbReference type="InParanoid" id="O77751"/>
<dbReference type="OrthoDB" id="9902161at2759"/>
<dbReference type="Proteomes" id="UP000001811">
    <property type="component" value="Unplaced"/>
</dbReference>
<dbReference type="GO" id="GO:0005783">
    <property type="term" value="C:endoplasmic reticulum"/>
    <property type="evidence" value="ECO:0000314"/>
    <property type="project" value="MGI"/>
</dbReference>
<dbReference type="GO" id="GO:0034702">
    <property type="term" value="C:monoatomic ion channel complex"/>
    <property type="evidence" value="ECO:0007669"/>
    <property type="project" value="UniProtKB-KW"/>
</dbReference>
<dbReference type="GO" id="GO:0031965">
    <property type="term" value="C:nuclear membrane"/>
    <property type="evidence" value="ECO:0000314"/>
    <property type="project" value="MGI"/>
</dbReference>
<dbReference type="GO" id="GO:0005640">
    <property type="term" value="C:nuclear outer membrane"/>
    <property type="evidence" value="ECO:0007669"/>
    <property type="project" value="UniProtKB-SubCell"/>
</dbReference>
<dbReference type="GO" id="GO:0033017">
    <property type="term" value="C:sarcoplasmic reticulum membrane"/>
    <property type="evidence" value="ECO:0000314"/>
    <property type="project" value="UniProtKB"/>
</dbReference>
<dbReference type="GO" id="GO:0022843">
    <property type="term" value="F:voltage-gated monoatomic cation channel activity"/>
    <property type="evidence" value="ECO:0000314"/>
    <property type="project" value="UniProtKB"/>
</dbReference>
<dbReference type="GO" id="GO:0071480">
    <property type="term" value="P:cellular response to gamma radiation"/>
    <property type="evidence" value="ECO:0007669"/>
    <property type="project" value="InterPro"/>
</dbReference>
<dbReference type="GO" id="GO:0042771">
    <property type="term" value="P:intrinsic apoptotic signaling pathway in response to DNA damage by p53 class mediator"/>
    <property type="evidence" value="ECO:0007669"/>
    <property type="project" value="TreeGrafter"/>
</dbReference>
<dbReference type="InterPro" id="IPR039492">
    <property type="entry name" value="TMEM109"/>
</dbReference>
<dbReference type="PANTHER" id="PTHR14550">
    <property type="entry name" value="TRANSMEMBRANE PROTEIN 109"/>
    <property type="match status" value="1"/>
</dbReference>
<dbReference type="PANTHER" id="PTHR14550:SF2">
    <property type="entry name" value="TRANSMEMBRANE PROTEIN 109"/>
    <property type="match status" value="1"/>
</dbReference>
<dbReference type="Pfam" id="PF14965">
    <property type="entry name" value="BRI3BP"/>
    <property type="match status" value="1"/>
</dbReference>
<comment type="function">
    <text evidence="1 2 4">Functions as a voltage-gated monoatomic cation channel permeable to both potassium and calcium (PubMed:21381722). Plays a role in the cellular response to DNA damage (By similarity).</text>
</comment>
<comment type="catalytic activity">
    <reaction evidence="4">
        <text>K(+)(in) = K(+)(out)</text>
        <dbReference type="Rhea" id="RHEA:29463"/>
        <dbReference type="ChEBI" id="CHEBI:29103"/>
    </reaction>
</comment>
<comment type="catalytic activity">
    <reaction evidence="4">
        <text>Ca(2+)(in) = Ca(2+)(out)</text>
        <dbReference type="Rhea" id="RHEA:29671"/>
        <dbReference type="ChEBI" id="CHEBI:29108"/>
    </reaction>
</comment>
<comment type="subunit">
    <text evidence="2 4">Homooligomer (PubMed:21381722). Interacts with CRYAB; in the cellular response to DNA damage (By similarity).</text>
</comment>
<comment type="subcellular location">
    <subcellularLocation>
        <location evidence="5">Nucleus outer membrane</location>
        <topology evidence="7">Multi-pass membrane protein</topology>
    </subcellularLocation>
    <subcellularLocation>
        <location evidence="4 5">Endoplasmic reticulum membrane</location>
        <topology evidence="7">Multi-pass membrane protein</topology>
    </subcellularLocation>
    <subcellularLocation>
        <location evidence="4 5">Sarcoplasmic reticulum membrane</location>
        <topology evidence="4">Multi-pass membrane protein</topology>
    </subcellularLocation>
</comment>
<comment type="tissue specificity">
    <text evidence="5">Widely expressed. Expressed in skeletal, cardiac and smooth muscle cells, in brain, including neuroglial cells, cerebral cortex neurons and cerebellum, but not Purkinje cells. Also detected in Paneth and Goblet cells of the small intestine (but not in the epithelium), duodenal gland, pancreas, parotid gland, testis, thyroid gland and adrenal gland, as well as in epidermis, choroid plexus, ductus epididymidis, lymphocytes, fibroblasts, endothelial cells and seminiferous epithelial cells (at protein level). Not detected in mucous cells of the duodenal gland, in hepatocytes nor in uriniferous tubules.</text>
</comment>
<comment type="PTM">
    <text>The N-terminus is blocked.</text>
</comment>
<accession>O77751</accession>
<gene>
    <name evidence="2" type="primary">TMEM109</name>
</gene>
<sequence length="243" mass="26146">MAGSGSSAPWGKHLLHAVLMVLVALVLLHSALAQSHRDFAPPGQQRREAPVDLLTQIGRSVRETLDTWIGPETMHLISETLSQVMWAISSAISVAFFALSGIAAQLLTALGLDGDHLTQGLKLSPSQVQTFLLWGAGALVVYWLLSLLLGLVLAVLGRILGGLKLVIFLAGFVALVRSVPDPSTRALLLLALLTLYALLSRLTGSRASGAQLEAKVRGLERQVDELRWRQRRAAKGARSVEEE</sequence>
<name>TM109_RABIT</name>
<protein>
    <recommendedName>
        <fullName evidence="7">Voltage-gated monoatomic cation channel TMEM109</fullName>
    </recommendedName>
    <alternativeName>
        <fullName evidence="6">Mitsugumin-23</fullName>
        <shortName evidence="6">Mg23</shortName>
    </alternativeName>
    <alternativeName>
        <fullName evidence="2">Transmembrane protein 109</fullName>
    </alternativeName>
</protein>